<accession>Q3ANM6</accession>
<sequence length="113" mass="12081">MAGFGLPNFGQLTEAFKKAQEIQQNAQALQDELDGMEIEGKSSDGRASVWLSGNQQPLRVRLDPALLQEGQQASETATLEALQAAYEQSTATMKGRMEELTGGLNLNLPGMGG</sequence>
<comment type="function">
    <text evidence="1">Binds to DNA and alters its conformation. May be involved in regulation of gene expression, nucleoid organization and DNA protection.</text>
</comment>
<comment type="subunit">
    <text evidence="1">Homodimer.</text>
</comment>
<comment type="subcellular location">
    <subcellularLocation>
        <location evidence="1">Cytoplasm</location>
        <location evidence="1">Nucleoid</location>
    </subcellularLocation>
</comment>
<comment type="similarity">
    <text evidence="1">Belongs to the YbaB/EbfC family.</text>
</comment>
<name>Y027_SYNSC</name>
<keyword id="KW-0963">Cytoplasm</keyword>
<keyword id="KW-0238">DNA-binding</keyword>
<protein>
    <recommendedName>
        <fullName evidence="1">Nucleoid-associated protein Syncc9605_0027</fullName>
    </recommendedName>
</protein>
<evidence type="ECO:0000255" key="1">
    <source>
        <dbReference type="HAMAP-Rule" id="MF_00274"/>
    </source>
</evidence>
<feature type="chain" id="PRO_1000003859" description="Nucleoid-associated protein Syncc9605_0027">
    <location>
        <begin position="1"/>
        <end position="113"/>
    </location>
</feature>
<proteinExistence type="inferred from homology"/>
<organism>
    <name type="scientific">Synechococcus sp. (strain CC9605)</name>
    <dbReference type="NCBI Taxonomy" id="110662"/>
    <lineage>
        <taxon>Bacteria</taxon>
        <taxon>Bacillati</taxon>
        <taxon>Cyanobacteriota</taxon>
        <taxon>Cyanophyceae</taxon>
        <taxon>Synechococcales</taxon>
        <taxon>Synechococcaceae</taxon>
        <taxon>Synechococcus</taxon>
    </lineage>
</organism>
<reference key="1">
    <citation type="submission" date="2005-07" db="EMBL/GenBank/DDBJ databases">
        <title>Complete sequence of Synechococcus sp. CC9605.</title>
        <authorList>
            <consortium name="US DOE Joint Genome Institute"/>
            <person name="Copeland A."/>
            <person name="Lucas S."/>
            <person name="Lapidus A."/>
            <person name="Barry K."/>
            <person name="Detter J.C."/>
            <person name="Glavina T."/>
            <person name="Hammon N."/>
            <person name="Israni S."/>
            <person name="Pitluck S."/>
            <person name="Schmutz J."/>
            <person name="Martinez M."/>
            <person name="Larimer F."/>
            <person name="Land M."/>
            <person name="Kyrpides N."/>
            <person name="Ivanova N."/>
            <person name="Richardson P."/>
        </authorList>
    </citation>
    <scope>NUCLEOTIDE SEQUENCE [LARGE SCALE GENOMIC DNA]</scope>
    <source>
        <strain>CC9605</strain>
    </source>
</reference>
<dbReference type="EMBL" id="CP000110">
    <property type="protein sequence ID" value="ABB33806.1"/>
    <property type="molecule type" value="Genomic_DNA"/>
</dbReference>
<dbReference type="RefSeq" id="WP_011363068.1">
    <property type="nucleotide sequence ID" value="NC_007516.1"/>
</dbReference>
<dbReference type="SMR" id="Q3ANM6"/>
<dbReference type="STRING" id="110662.Syncc9605_0027"/>
<dbReference type="KEGG" id="syd:Syncc9605_0027"/>
<dbReference type="eggNOG" id="COG0718">
    <property type="taxonomic scope" value="Bacteria"/>
</dbReference>
<dbReference type="HOGENOM" id="CLU_140930_0_1_3"/>
<dbReference type="OrthoDB" id="487780at2"/>
<dbReference type="GO" id="GO:0043590">
    <property type="term" value="C:bacterial nucleoid"/>
    <property type="evidence" value="ECO:0007669"/>
    <property type="project" value="UniProtKB-UniRule"/>
</dbReference>
<dbReference type="GO" id="GO:0005829">
    <property type="term" value="C:cytosol"/>
    <property type="evidence" value="ECO:0007669"/>
    <property type="project" value="TreeGrafter"/>
</dbReference>
<dbReference type="GO" id="GO:0003677">
    <property type="term" value="F:DNA binding"/>
    <property type="evidence" value="ECO:0007669"/>
    <property type="project" value="UniProtKB-UniRule"/>
</dbReference>
<dbReference type="Gene3D" id="3.30.1310.10">
    <property type="entry name" value="Nucleoid-associated protein YbaB-like domain"/>
    <property type="match status" value="1"/>
</dbReference>
<dbReference type="HAMAP" id="MF_00274">
    <property type="entry name" value="DNA_YbaB_EbfC"/>
    <property type="match status" value="1"/>
</dbReference>
<dbReference type="InterPro" id="IPR036894">
    <property type="entry name" value="YbaB-like_sf"/>
</dbReference>
<dbReference type="InterPro" id="IPR004401">
    <property type="entry name" value="YbaB/EbfC"/>
</dbReference>
<dbReference type="NCBIfam" id="TIGR00103">
    <property type="entry name" value="DNA_YbaB_EbfC"/>
    <property type="match status" value="1"/>
</dbReference>
<dbReference type="PANTHER" id="PTHR33449">
    <property type="entry name" value="NUCLEOID-ASSOCIATED PROTEIN YBAB"/>
    <property type="match status" value="1"/>
</dbReference>
<dbReference type="PANTHER" id="PTHR33449:SF1">
    <property type="entry name" value="NUCLEOID-ASSOCIATED PROTEIN YBAB"/>
    <property type="match status" value="1"/>
</dbReference>
<dbReference type="Pfam" id="PF02575">
    <property type="entry name" value="YbaB_DNA_bd"/>
    <property type="match status" value="1"/>
</dbReference>
<dbReference type="PIRSF" id="PIRSF004555">
    <property type="entry name" value="UCP004555"/>
    <property type="match status" value="1"/>
</dbReference>
<dbReference type="SUPFAM" id="SSF82607">
    <property type="entry name" value="YbaB-like"/>
    <property type="match status" value="1"/>
</dbReference>
<gene>
    <name type="ordered locus">Syncc9605_0027</name>
</gene>